<dbReference type="EMBL" id="U28945">
    <property type="protein sequence ID" value="AAC48472.1"/>
    <property type="molecule type" value="mRNA"/>
</dbReference>
<dbReference type="PIR" id="I46536">
    <property type="entry name" value="I46536"/>
</dbReference>
<dbReference type="RefSeq" id="NP_001164517.1">
    <property type="nucleotide sequence ID" value="NM_001171046.2"/>
</dbReference>
<dbReference type="SMR" id="Q28634"/>
<dbReference type="FunCoup" id="Q28634">
    <property type="interactions" value="144"/>
</dbReference>
<dbReference type="GlyCosmos" id="Q28634">
    <property type="glycosylation" value="3 sites, No reported glycans"/>
</dbReference>
<dbReference type="PaxDb" id="9986-ENSOCUP00000000506"/>
<dbReference type="GeneID" id="100328594"/>
<dbReference type="KEGG" id="ocu:100328594"/>
<dbReference type="CTD" id="1014"/>
<dbReference type="eggNOG" id="KOG3594">
    <property type="taxonomic scope" value="Eukaryota"/>
</dbReference>
<dbReference type="InParanoid" id="Q28634"/>
<dbReference type="OrthoDB" id="8804268at2759"/>
<dbReference type="Proteomes" id="UP000001811">
    <property type="component" value="Unplaced"/>
</dbReference>
<dbReference type="GO" id="GO:0005912">
    <property type="term" value="C:adherens junction"/>
    <property type="evidence" value="ECO:0007669"/>
    <property type="project" value="TreeGrafter"/>
</dbReference>
<dbReference type="GO" id="GO:0016342">
    <property type="term" value="C:catenin complex"/>
    <property type="evidence" value="ECO:0007669"/>
    <property type="project" value="TreeGrafter"/>
</dbReference>
<dbReference type="GO" id="GO:0008013">
    <property type="term" value="F:beta-catenin binding"/>
    <property type="evidence" value="ECO:0007669"/>
    <property type="project" value="TreeGrafter"/>
</dbReference>
<dbReference type="GO" id="GO:0045296">
    <property type="term" value="F:cadherin binding"/>
    <property type="evidence" value="ECO:0007669"/>
    <property type="project" value="TreeGrafter"/>
</dbReference>
<dbReference type="GO" id="GO:0005509">
    <property type="term" value="F:calcium ion binding"/>
    <property type="evidence" value="ECO:0007669"/>
    <property type="project" value="InterPro"/>
</dbReference>
<dbReference type="GO" id="GO:0034332">
    <property type="term" value="P:adherens junction organization"/>
    <property type="evidence" value="ECO:0007669"/>
    <property type="project" value="TreeGrafter"/>
</dbReference>
<dbReference type="GO" id="GO:0016339">
    <property type="term" value="P:calcium-dependent cell-cell adhesion via plasma membrane cell adhesion molecules"/>
    <property type="evidence" value="ECO:0007669"/>
    <property type="project" value="TreeGrafter"/>
</dbReference>
<dbReference type="GO" id="GO:0016477">
    <property type="term" value="P:cell migration"/>
    <property type="evidence" value="ECO:0007669"/>
    <property type="project" value="TreeGrafter"/>
</dbReference>
<dbReference type="GO" id="GO:0000902">
    <property type="term" value="P:cell morphogenesis"/>
    <property type="evidence" value="ECO:0007669"/>
    <property type="project" value="TreeGrafter"/>
</dbReference>
<dbReference type="GO" id="GO:0044331">
    <property type="term" value="P:cell-cell adhesion mediated by cadherin"/>
    <property type="evidence" value="ECO:0007669"/>
    <property type="project" value="TreeGrafter"/>
</dbReference>
<dbReference type="GO" id="GO:0007043">
    <property type="term" value="P:cell-cell junction assembly"/>
    <property type="evidence" value="ECO:0007669"/>
    <property type="project" value="TreeGrafter"/>
</dbReference>
<dbReference type="GO" id="GO:0007156">
    <property type="term" value="P:homophilic cell adhesion via plasma membrane adhesion molecules"/>
    <property type="evidence" value="ECO:0007669"/>
    <property type="project" value="InterPro"/>
</dbReference>
<dbReference type="CDD" id="cd11304">
    <property type="entry name" value="Cadherin_repeat"/>
    <property type="match status" value="6"/>
</dbReference>
<dbReference type="FunFam" id="2.60.40.60:FF:000167">
    <property type="entry name" value="Cadherin 16"/>
    <property type="match status" value="1"/>
</dbReference>
<dbReference type="FunFam" id="2.60.40.60:FF:000187">
    <property type="entry name" value="Cadherin 16"/>
    <property type="match status" value="1"/>
</dbReference>
<dbReference type="FunFam" id="2.60.40.60:FF:000195">
    <property type="entry name" value="Cadherin 16"/>
    <property type="match status" value="1"/>
</dbReference>
<dbReference type="FunFam" id="2.60.40.60:FF:000240">
    <property type="entry name" value="Cadherin 16"/>
    <property type="match status" value="1"/>
</dbReference>
<dbReference type="FunFam" id="2.60.40.60:FF:000241">
    <property type="entry name" value="Cadherin 16"/>
    <property type="match status" value="1"/>
</dbReference>
<dbReference type="FunFam" id="2.60.40.60:FF:000149">
    <property type="entry name" value="cadherin-16 isoform X1"/>
    <property type="match status" value="1"/>
</dbReference>
<dbReference type="FunFam" id="2.60.40.60:FF:000159">
    <property type="entry name" value="cadherin-16 isoform X1"/>
    <property type="match status" value="1"/>
</dbReference>
<dbReference type="Gene3D" id="2.60.40.60">
    <property type="entry name" value="Cadherins"/>
    <property type="match status" value="7"/>
</dbReference>
<dbReference type="InterPro" id="IPR039808">
    <property type="entry name" value="Cadherin"/>
</dbReference>
<dbReference type="InterPro" id="IPR002126">
    <property type="entry name" value="Cadherin-like_dom"/>
</dbReference>
<dbReference type="InterPro" id="IPR015919">
    <property type="entry name" value="Cadherin-like_sf"/>
</dbReference>
<dbReference type="InterPro" id="IPR020894">
    <property type="entry name" value="Cadherin_CS"/>
</dbReference>
<dbReference type="PANTHER" id="PTHR24027:SF424">
    <property type="entry name" value="CADHERIN-16 ISOFORM X3"/>
    <property type="match status" value="1"/>
</dbReference>
<dbReference type="PANTHER" id="PTHR24027">
    <property type="entry name" value="CADHERIN-23"/>
    <property type="match status" value="1"/>
</dbReference>
<dbReference type="Pfam" id="PF00028">
    <property type="entry name" value="Cadherin"/>
    <property type="match status" value="4"/>
</dbReference>
<dbReference type="PRINTS" id="PR00205">
    <property type="entry name" value="CADHERIN"/>
</dbReference>
<dbReference type="SMART" id="SM00112">
    <property type="entry name" value="CA"/>
    <property type="match status" value="6"/>
</dbReference>
<dbReference type="SUPFAM" id="SSF49313">
    <property type="entry name" value="Cadherin-like"/>
    <property type="match status" value="6"/>
</dbReference>
<dbReference type="PROSITE" id="PS00232">
    <property type="entry name" value="CADHERIN_1"/>
    <property type="match status" value="2"/>
</dbReference>
<dbReference type="PROSITE" id="PS50268">
    <property type="entry name" value="CADHERIN_2"/>
    <property type="match status" value="6"/>
</dbReference>
<keyword id="KW-0106">Calcium</keyword>
<keyword id="KW-0130">Cell adhesion</keyword>
<keyword id="KW-1003">Cell membrane</keyword>
<keyword id="KW-0903">Direct protein sequencing</keyword>
<keyword id="KW-0325">Glycoprotein</keyword>
<keyword id="KW-0472">Membrane</keyword>
<keyword id="KW-0479">Metal-binding</keyword>
<keyword id="KW-1185">Reference proteome</keyword>
<keyword id="KW-0677">Repeat</keyword>
<keyword id="KW-0732">Signal</keyword>
<keyword id="KW-0812">Transmembrane</keyword>
<keyword id="KW-1133">Transmembrane helix</keyword>
<accession>Q28634</accession>
<gene>
    <name type="primary">CDH16</name>
</gene>
<sequence>MVPAWLWLLCFSVPQALVEVSPTTLHVEVPENYGGNFPLYLTKLPWPHKEAGGRVVLSGDSGVAAEGPFSVEAESGFLLVTRALDREEQAEYQIQVTLEAEDGHVLWGPQSVTVHVKDENDQVPQFSQALYSARLSQGTRPGVPFLFLEASDGDEPGTANSDLRFHILSQTPAQPSPDVFRLEPRLGALALSPEGSAGFDHALEGPYQLLVQVKDMGDQASGHQATATVEISIVESTWTPLEPVHLAENLKVPYPHHLAQVHWSGGDVHYRLESQPPGPFDVDTEGKLYVTGELDREAQEQYVLQVQAQNSRGEDYAEPLELHVVVTDENDHAPVCPPRGPPVSVPELSPPGTAVTTLSAEDADAPGSPNSHVVYRLLSPEPQEGPEGGAFQLDPTSGSVSLGAAPLEAGQNMLLQVLAVDLAGAEAGLSSTCEVAVTVTDVNDHAPEFTSSQVGPVSLPEDTEPGTLVATLTATDADLEPAFRLMDFTIEAGDGEGTFGLDWEPDSGHVQLYLLKNLSYEAAPSHTVVVVVRNVVETVGPGPGPGATATVTVLVEKVMPPPRLEQKSYEADIPVNAPAGSFLLTIQPAEPWNGALRFSLVNDSEGWFCIQKVSGEVHTARPLQGARPGDSYTVLVEAQDADAPRLSTSAALVIHFLRAPPAPALPLAPMPSRHLCTPRQDHGVLIPAPSEDPDMATGHGPYSFALGPNPTVQRDWRLQPLNDSHAFLTLALHWVEPREHIVPVVVSQDARVWQLPVRVVVCRCNTEGECMRKVGRMKGMPTKLSAVGILVGTLAAIGFFLILIFTHLALARKKDLDAPADNVPLKAAA</sequence>
<name>CAD16_RABIT</name>
<evidence type="ECO:0000250" key="1"/>
<evidence type="ECO:0000255" key="2"/>
<evidence type="ECO:0000255" key="3">
    <source>
        <dbReference type="PROSITE-ProRule" id="PRU00043"/>
    </source>
</evidence>
<organism>
    <name type="scientific">Oryctolagus cuniculus</name>
    <name type="common">Rabbit</name>
    <dbReference type="NCBI Taxonomy" id="9986"/>
    <lineage>
        <taxon>Eukaryota</taxon>
        <taxon>Metazoa</taxon>
        <taxon>Chordata</taxon>
        <taxon>Craniata</taxon>
        <taxon>Vertebrata</taxon>
        <taxon>Euteleostomi</taxon>
        <taxon>Mammalia</taxon>
        <taxon>Eutheria</taxon>
        <taxon>Euarchontoglires</taxon>
        <taxon>Glires</taxon>
        <taxon>Lagomorpha</taxon>
        <taxon>Leporidae</taxon>
        <taxon>Oryctolagus</taxon>
    </lineage>
</organism>
<protein>
    <recommendedName>
        <fullName>Cadherin-16</fullName>
    </recommendedName>
    <alternativeName>
        <fullName>Kidney-specific cadherin</fullName>
        <shortName>Ksp-cadherin</shortName>
    </alternativeName>
</protein>
<proteinExistence type="evidence at protein level"/>
<comment type="function">
    <text>Cadherins are calcium-dependent cell adhesion proteins. They preferentially interact with themselves in a homophilic manner in connecting cells; cadherins may thus contribute to the sorting of heterogeneous cell types.</text>
</comment>
<comment type="subcellular location">
    <subcellularLocation>
        <location>Cell membrane</location>
        <topology>Single-pass type I membrane protein</topology>
    </subcellularLocation>
</comment>
<comment type="tissue specificity">
    <text>Kidney specific. Limited to the basolateral membranes of renal tubular epithelial cells.</text>
</comment>
<comment type="domain">
    <text evidence="1">Three calcium ions are usually bound at the interface of each cadherin domain and rigidify the connections, imparting a strong curvature to the full-length ectodomain.</text>
</comment>
<feature type="signal peptide" evidence="2">
    <location>
        <begin position="1"/>
        <end position="18"/>
    </location>
</feature>
<feature type="chain" id="PRO_0000003811" description="Cadherin-16">
    <location>
        <begin position="19"/>
        <end position="829"/>
    </location>
</feature>
<feature type="topological domain" description="Extracellular" evidence="2">
    <location>
        <begin position="19"/>
        <end position="786"/>
    </location>
</feature>
<feature type="transmembrane region" description="Helical" evidence="2">
    <location>
        <begin position="787"/>
        <end position="807"/>
    </location>
</feature>
<feature type="topological domain" description="Cytoplasmic" evidence="2">
    <location>
        <begin position="808"/>
        <end position="829"/>
    </location>
</feature>
<feature type="domain" description="Cadherin 1" evidence="3">
    <location>
        <begin position="25"/>
        <end position="126"/>
    </location>
</feature>
<feature type="domain" description="Cadherin 2" evidence="3">
    <location>
        <begin position="131"/>
        <end position="235"/>
    </location>
</feature>
<feature type="domain" description="Cadherin 3" evidence="3">
    <location>
        <begin position="242"/>
        <end position="336"/>
    </location>
</feature>
<feature type="domain" description="Cadherin 4" evidence="3">
    <location>
        <begin position="341"/>
        <end position="449"/>
    </location>
</feature>
<feature type="domain" description="Cadherin 5" evidence="3">
    <location>
        <begin position="455"/>
        <end position="564"/>
    </location>
</feature>
<feature type="domain" description="Cadherin 6" evidence="3">
    <location>
        <begin position="569"/>
        <end position="665"/>
    </location>
</feature>
<feature type="region of interest" description="Ectodomain G">
    <location>
        <begin position="666"/>
        <end position="786"/>
    </location>
</feature>
<feature type="glycosylation site" description="N-linked (GlcNAc...) asparagine" evidence="2">
    <location>
        <position position="517"/>
    </location>
</feature>
<feature type="glycosylation site" description="N-linked (GlcNAc...) asparagine" evidence="2">
    <location>
        <position position="602"/>
    </location>
</feature>
<feature type="glycosylation site" description="N-linked (GlcNAc...) asparagine" evidence="2">
    <location>
        <position position="722"/>
    </location>
</feature>
<reference key="1">
    <citation type="journal article" date="1995" name="J. Biol. Chem.">
        <title>Isolation and cDNA cloning of Ksp-cadherin, a novel kidney-specific member of the cadherin multigene family.</title>
        <authorList>
            <person name="Thomson R.B."/>
            <person name="Igarashi P."/>
            <person name="Biemesderfer D."/>
            <person name="Kim R."/>
            <person name="Abu-Alfa A."/>
            <person name="Soleimani M."/>
            <person name="Aronson P.S."/>
        </authorList>
    </citation>
    <scope>NUCLEOTIDE SEQUENCE [MRNA]</scope>
    <scope>PROTEIN SEQUENCE OF 570-586</scope>
    <source>
        <strain>New Zealand white</strain>
    </source>
</reference>